<name>PMGT2_XENLA</name>
<feature type="chain" id="PRO_0000249022" description="Protein O-linked-mannose beta-1,4-N-acetylglucosaminyltransferase 2">
    <location>
        <begin position="1"/>
        <end position="578"/>
    </location>
</feature>
<feature type="topological domain" description="Cytoplasmic" evidence="2">
    <location>
        <begin position="1"/>
        <end position="4"/>
    </location>
</feature>
<feature type="transmembrane region" description="Helical; Signal-anchor for type II membrane protein" evidence="2">
    <location>
        <begin position="5"/>
        <end position="25"/>
    </location>
</feature>
<feature type="topological domain" description="Lumenal" evidence="2">
    <location>
        <begin position="26"/>
        <end position="578"/>
    </location>
</feature>
<feature type="domain" description="Fibronectin type-III" evidence="3">
    <location>
        <begin position="484"/>
        <end position="578"/>
    </location>
</feature>
<feature type="glycosylation site" description="N-linked (GlcNAc...) asparagine" evidence="2">
    <location>
        <position position="98"/>
    </location>
</feature>
<feature type="glycosylation site" description="N-linked (GlcNAc...) asparagine" evidence="2">
    <location>
        <position position="275"/>
    </location>
</feature>
<feature type="glycosylation site" description="N-linked (GlcNAc...) asparagine" evidence="2">
    <location>
        <position position="335"/>
    </location>
</feature>
<feature type="glycosylation site" description="N-linked (GlcNAc...) asparagine" evidence="2">
    <location>
        <position position="451"/>
    </location>
</feature>
<feature type="glycosylation site" description="N-linked (GlcNAc...) asparagine" evidence="2">
    <location>
        <position position="541"/>
    </location>
</feature>
<feature type="glycosylation site" description="N-linked (GlcNAc...) asparagine" evidence="2">
    <location>
        <position position="563"/>
    </location>
</feature>
<dbReference type="EC" id="2.4.1.312" evidence="1"/>
<dbReference type="EMBL" id="AJ868537">
    <property type="protein sequence ID" value="CAI30871.1"/>
    <property type="molecule type" value="mRNA"/>
</dbReference>
<dbReference type="RefSeq" id="NP_001086091.1">
    <property type="nucleotide sequence ID" value="NM_001092622.1"/>
</dbReference>
<dbReference type="SMR" id="Q5NDE7"/>
<dbReference type="CAZy" id="GT61">
    <property type="family name" value="Glycosyltransferase Family 61"/>
</dbReference>
<dbReference type="GlyCosmos" id="Q5NDE7">
    <property type="glycosylation" value="6 sites, No reported glycans"/>
</dbReference>
<dbReference type="GeneID" id="444520"/>
<dbReference type="KEGG" id="xla:444520"/>
<dbReference type="AGR" id="Xenbase:XB-GENE-973755"/>
<dbReference type="CTD" id="444520"/>
<dbReference type="Xenbase" id="XB-GENE-973755">
    <property type="gene designation" value="pomgnt2.L"/>
</dbReference>
<dbReference type="OrthoDB" id="529273at2759"/>
<dbReference type="UniPathway" id="UPA00378"/>
<dbReference type="Proteomes" id="UP000186698">
    <property type="component" value="Chromosome 6L"/>
</dbReference>
<dbReference type="Bgee" id="444520">
    <property type="expression patterns" value="Expressed in brain and 19 other cell types or tissues"/>
</dbReference>
<dbReference type="GO" id="GO:0005783">
    <property type="term" value="C:endoplasmic reticulum"/>
    <property type="evidence" value="ECO:0000250"/>
    <property type="project" value="UniProtKB"/>
</dbReference>
<dbReference type="GO" id="GO:0005789">
    <property type="term" value="C:endoplasmic reticulum membrane"/>
    <property type="evidence" value="ECO:0007669"/>
    <property type="project" value="UniProtKB-SubCell"/>
</dbReference>
<dbReference type="GO" id="GO:0008375">
    <property type="term" value="F:acetylglucosaminyltransferase activity"/>
    <property type="evidence" value="ECO:0000250"/>
    <property type="project" value="UniProtKB"/>
</dbReference>
<dbReference type="GO" id="GO:0097363">
    <property type="term" value="F:protein O-acetylglucosaminyltransferase activity"/>
    <property type="evidence" value="ECO:0000318"/>
    <property type="project" value="GO_Central"/>
</dbReference>
<dbReference type="GO" id="GO:0001764">
    <property type="term" value="P:neuron migration"/>
    <property type="evidence" value="ECO:0000250"/>
    <property type="project" value="UniProtKB"/>
</dbReference>
<dbReference type="GO" id="GO:0006493">
    <property type="term" value="P:protein O-linked glycosylation"/>
    <property type="evidence" value="ECO:0000250"/>
    <property type="project" value="UniProtKB"/>
</dbReference>
<dbReference type="GO" id="GO:0035269">
    <property type="term" value="P:protein O-linked mannosylation"/>
    <property type="evidence" value="ECO:0000250"/>
    <property type="project" value="UniProtKB"/>
</dbReference>
<dbReference type="Gene3D" id="2.60.40.10">
    <property type="entry name" value="Immunoglobulins"/>
    <property type="match status" value="1"/>
</dbReference>
<dbReference type="InterPro" id="IPR003961">
    <property type="entry name" value="FN3_dom"/>
</dbReference>
<dbReference type="InterPro" id="IPR036116">
    <property type="entry name" value="FN3_sf"/>
</dbReference>
<dbReference type="InterPro" id="IPR049625">
    <property type="entry name" value="Glyco_transf_61_cat"/>
</dbReference>
<dbReference type="InterPro" id="IPR007657">
    <property type="entry name" value="Glycosyltransferase_61"/>
</dbReference>
<dbReference type="InterPro" id="IPR013783">
    <property type="entry name" value="Ig-like_fold"/>
</dbReference>
<dbReference type="PANTHER" id="PTHR20961">
    <property type="entry name" value="GLYCOSYLTRANSFERASE"/>
    <property type="match status" value="1"/>
</dbReference>
<dbReference type="PANTHER" id="PTHR20961:SF38">
    <property type="entry name" value="PROTEIN O-LINKED-MANNOSE BETA-1,4-N-ACETYLGLUCOSAMINYLTRANSFERASE 2"/>
    <property type="match status" value="1"/>
</dbReference>
<dbReference type="Pfam" id="PF04577">
    <property type="entry name" value="Glyco_transf_61"/>
    <property type="match status" value="1"/>
</dbReference>
<dbReference type="SUPFAM" id="SSF49265">
    <property type="entry name" value="Fibronectin type III"/>
    <property type="match status" value="1"/>
</dbReference>
<dbReference type="PROSITE" id="PS50853">
    <property type="entry name" value="FN3"/>
    <property type="match status" value="1"/>
</dbReference>
<reference key="1">
    <citation type="submission" date="2004-12" db="EMBL/GenBank/DDBJ databases">
        <title>Phylogeny of xylosyltransferases.</title>
        <authorList>
            <person name="Kiefer-Meyer M.C."/>
            <person name="Pagny S."/>
            <person name="Durambure G."/>
            <person name="Faye L."/>
            <person name="Gomord V."/>
            <person name="Mollicone R."/>
            <person name="Oriol R."/>
        </authorList>
    </citation>
    <scope>NUCLEOTIDE SEQUENCE [MRNA]</scope>
</reference>
<organism>
    <name type="scientific">Xenopus laevis</name>
    <name type="common">African clawed frog</name>
    <dbReference type="NCBI Taxonomy" id="8355"/>
    <lineage>
        <taxon>Eukaryota</taxon>
        <taxon>Metazoa</taxon>
        <taxon>Chordata</taxon>
        <taxon>Craniata</taxon>
        <taxon>Vertebrata</taxon>
        <taxon>Euteleostomi</taxon>
        <taxon>Amphibia</taxon>
        <taxon>Batrachia</taxon>
        <taxon>Anura</taxon>
        <taxon>Pipoidea</taxon>
        <taxon>Pipidae</taxon>
        <taxon>Xenopodinae</taxon>
        <taxon>Xenopus</taxon>
        <taxon>Xenopus</taxon>
    </lineage>
</organism>
<keyword id="KW-0256">Endoplasmic reticulum</keyword>
<keyword id="KW-0325">Glycoprotein</keyword>
<keyword id="KW-0328">Glycosyltransferase</keyword>
<keyword id="KW-0472">Membrane</keyword>
<keyword id="KW-1185">Reference proteome</keyword>
<keyword id="KW-0735">Signal-anchor</keyword>
<keyword id="KW-0808">Transferase</keyword>
<keyword id="KW-0812">Transmembrane</keyword>
<keyword id="KW-1133">Transmembrane helix</keyword>
<proteinExistence type="evidence at transcript level"/>
<gene>
    <name type="primary">pomgnt2</name>
    <name type="synonym">ago61</name>
    <name type="synonym">gtdc2</name>
</gene>
<protein>
    <recommendedName>
        <fullName>Protein O-linked-mannose beta-1,4-N-acetylglucosaminyltransferase 2</fullName>
        <shortName>POMGnT2</shortName>
        <ecNumber evidence="1">2.4.1.312</ecNumber>
    </recommendedName>
    <alternativeName>
        <fullName>Extracellular O-linked N-acetylglucosamine transferase-like</fullName>
    </alternativeName>
    <alternativeName>
        <fullName>Glycosyltransferase-like domain-containing protein 2</fullName>
    </alternativeName>
</protein>
<comment type="function">
    <text evidence="1">O-linked mannose beta-1,4-N-acetylglucosaminyltransferase that transfers UDP-N-acetyl-D-glucosamine to the 4-position of the mannose to generate N-acetyl-D-glucosamine-beta-1,4-O-D-mannosylprotein. Involved in the biosynthesis of the phosphorylated O-mannosyl trisaccharide (N-acetylgalactosamine-beta-3-N-acetylglucosamine-beta-4-(phosphate-6-)mannose), a carbohydrate structure present in alpha-dystroglycan (DAG1), which is required for binding laminin G-like domain-containing extracellular proteins with high affinity (By similarity).</text>
</comment>
<comment type="catalytic activity">
    <reaction evidence="1">
        <text>3-O-(alpha-D-mannosyl)-L-threonyl-[protein] + UDP-N-acetyl-alpha-D-glucosamine = 3-O-(N-acetyl-beta-D-glucosaminyl-(1-&gt;4)-alpha-D-mannosyl)-L-threonyl-[protein] + UDP + H(+)</text>
        <dbReference type="Rhea" id="RHEA:37663"/>
        <dbReference type="Rhea" id="RHEA-COMP:13547"/>
        <dbReference type="Rhea" id="RHEA-COMP:13618"/>
        <dbReference type="ChEBI" id="CHEBI:15378"/>
        <dbReference type="ChEBI" id="CHEBI:57705"/>
        <dbReference type="ChEBI" id="CHEBI:58223"/>
        <dbReference type="ChEBI" id="CHEBI:137323"/>
        <dbReference type="ChEBI" id="CHEBI:137540"/>
        <dbReference type="EC" id="2.4.1.312"/>
    </reaction>
</comment>
<comment type="pathway">
    <text evidence="1">Protein modification; protein glycosylation.</text>
</comment>
<comment type="subcellular location">
    <subcellularLocation>
        <location evidence="1">Endoplasmic reticulum membrane</location>
        <topology evidence="1">Single-pass type II membrane protein</topology>
    </subcellularLocation>
</comment>
<comment type="similarity">
    <text evidence="4">Belongs to the glycosyltransferase 61 family.</text>
</comment>
<evidence type="ECO:0000250" key="1">
    <source>
        <dbReference type="UniProtKB" id="Q8NAT1"/>
    </source>
</evidence>
<evidence type="ECO:0000255" key="2"/>
<evidence type="ECO:0000255" key="3">
    <source>
        <dbReference type="PROSITE-ProRule" id="PRU00316"/>
    </source>
</evidence>
<evidence type="ECO:0000305" key="4"/>
<accession>Q5NDE7</accession>
<sequence>MNISAVFSALLVSIMAAVLWKHVKLLDQFYVIEEELELTRQSQELSQVRIDYQAALQALVEDGTRMVCSGRMHTDRVCRFESLCYSTEAEEFVFFHSNASIMLPNLGPRRFQPALLDLSSVDDHNTQYFNFIELPAAALKFMPKPVFVPDVALIMNRFNPDNLMHVFHDDLLPIFYTIQQFPDLDFESRLFFMEGWNEGLHFELYKFMSNKQPLLKEQLKTLGRLLCFTKSYVGLSKITTWYQYGFVQPQGPKANILVSGNEIRHFAKFMMGKLNITLDQNAAEAYIVLFSRSMNRLIVNEAELLLALAQEFQMKTITVSLEDHSFSDIVRLLSNATMLVSMHGAQLVTSLFLPKGAVVVELFPYGINPEHYTPYKTLSTLPGMELQYVAWQNTEEENTITYPDRPWEQGGIVHLETKEQERIKKSKEVPRHLCCRNPEWLFRIYQDTKVNISSLIQVIKSTVKKKLGLRRQKWTQGLYPGKVRESKCQASAQGTSEAKLFVSWQIPWNLKFLKVRDVKYEVWIQEQGENSYMPYILSQQNYTFSENIKPFTTYLVWIRCIFNKTLLGPFAEVLVCST</sequence>